<dbReference type="EC" id="2.7.10.1"/>
<dbReference type="EMBL" id="M35196">
    <property type="protein sequence ID" value="AAA48665.1"/>
    <property type="molecule type" value="mRNA"/>
</dbReference>
<dbReference type="PIR" id="B35963">
    <property type="entry name" value="B35963"/>
</dbReference>
<dbReference type="RefSeq" id="NP_990650.1">
    <property type="nucleotide sequence ID" value="NM_205319.2"/>
</dbReference>
<dbReference type="SMR" id="P18461"/>
<dbReference type="FunCoup" id="P18461">
    <property type="interactions" value="571"/>
</dbReference>
<dbReference type="STRING" id="9031.ENSGALP00000045192"/>
<dbReference type="GlyCosmos" id="P18461">
    <property type="glycosylation" value="9 sites, No reported glycans"/>
</dbReference>
<dbReference type="GlyGen" id="P18461">
    <property type="glycosylation" value="9 sites"/>
</dbReference>
<dbReference type="PaxDb" id="9031-ENSGALP00000037940"/>
<dbReference type="GeneID" id="396259"/>
<dbReference type="KEGG" id="gga:396259"/>
<dbReference type="CTD" id="2263"/>
<dbReference type="VEuPathDB" id="HostDB:geneid_396259"/>
<dbReference type="eggNOG" id="KOG0200">
    <property type="taxonomic scope" value="Eukaryota"/>
</dbReference>
<dbReference type="HOGENOM" id="CLU_000288_74_3_1"/>
<dbReference type="InParanoid" id="P18461"/>
<dbReference type="OrthoDB" id="5984265at2759"/>
<dbReference type="BRENDA" id="2.7.10.1">
    <property type="organism ID" value="1306"/>
</dbReference>
<dbReference type="Reactome" id="R-GGA-109704">
    <property type="pathway name" value="PI3K Cascade"/>
</dbReference>
<dbReference type="Reactome" id="R-GGA-1257604">
    <property type="pathway name" value="PIP3 activates AKT signaling"/>
</dbReference>
<dbReference type="Reactome" id="R-GGA-190375">
    <property type="pathway name" value="FGFR2c ligand binding and activation"/>
</dbReference>
<dbReference type="Reactome" id="R-GGA-190377">
    <property type="pathway name" value="FGFR2b ligand binding and activation"/>
</dbReference>
<dbReference type="Reactome" id="R-GGA-5654221">
    <property type="pathway name" value="Phospholipase C-mediated cascade, FGFR2"/>
</dbReference>
<dbReference type="Reactome" id="R-GGA-5654695">
    <property type="pathway name" value="PI-3K cascade:FGFR2"/>
</dbReference>
<dbReference type="Reactome" id="R-GGA-5654699">
    <property type="pathway name" value="SHC-mediated cascade:FGFR2"/>
</dbReference>
<dbReference type="Reactome" id="R-GGA-5654700">
    <property type="pathway name" value="FRS-mediated FGFR2 signaling"/>
</dbReference>
<dbReference type="Reactome" id="R-GGA-5654727">
    <property type="pathway name" value="Negative regulation of FGFR2 signaling"/>
</dbReference>
<dbReference type="Reactome" id="R-GGA-5673001">
    <property type="pathway name" value="RAF/MAP kinase cascade"/>
</dbReference>
<dbReference type="Reactome" id="R-GGA-6811558">
    <property type="pathway name" value="PI5P, PP2A and IER3 Regulate PI3K/AKT Signaling"/>
</dbReference>
<dbReference type="PRO" id="PR:P18461"/>
<dbReference type="Proteomes" id="UP000000539">
    <property type="component" value="Chromosome 6"/>
</dbReference>
<dbReference type="Bgee" id="ENSGALG00000009495">
    <property type="expression patterns" value="Expressed in ovary and 11 other cell types or tissues"/>
</dbReference>
<dbReference type="GO" id="GO:0031410">
    <property type="term" value="C:cytoplasmic vesicle"/>
    <property type="evidence" value="ECO:0007669"/>
    <property type="project" value="UniProtKB-KW"/>
</dbReference>
<dbReference type="GO" id="GO:0005794">
    <property type="term" value="C:Golgi apparatus"/>
    <property type="evidence" value="ECO:0007669"/>
    <property type="project" value="UniProtKB-SubCell"/>
</dbReference>
<dbReference type="GO" id="GO:0005886">
    <property type="term" value="C:plasma membrane"/>
    <property type="evidence" value="ECO:0000318"/>
    <property type="project" value="GO_Central"/>
</dbReference>
<dbReference type="GO" id="GO:0043235">
    <property type="term" value="C:receptor complex"/>
    <property type="evidence" value="ECO:0000318"/>
    <property type="project" value="GO_Central"/>
</dbReference>
<dbReference type="GO" id="GO:0005524">
    <property type="term" value="F:ATP binding"/>
    <property type="evidence" value="ECO:0007669"/>
    <property type="project" value="UniProtKB-KW"/>
</dbReference>
<dbReference type="GO" id="GO:0017134">
    <property type="term" value="F:fibroblast growth factor binding"/>
    <property type="evidence" value="ECO:0000318"/>
    <property type="project" value="GO_Central"/>
</dbReference>
<dbReference type="GO" id="GO:0005007">
    <property type="term" value="F:fibroblast growth factor receptor activity"/>
    <property type="evidence" value="ECO:0000318"/>
    <property type="project" value="GO_Central"/>
</dbReference>
<dbReference type="GO" id="GO:0001525">
    <property type="term" value="P:angiogenesis"/>
    <property type="evidence" value="ECO:0000318"/>
    <property type="project" value="GO_Central"/>
</dbReference>
<dbReference type="GO" id="GO:0006915">
    <property type="term" value="P:apoptotic process"/>
    <property type="evidence" value="ECO:0007669"/>
    <property type="project" value="UniProtKB-KW"/>
</dbReference>
<dbReference type="GO" id="GO:0008543">
    <property type="term" value="P:fibroblast growth factor receptor signaling pathway"/>
    <property type="evidence" value="ECO:0000318"/>
    <property type="project" value="GO_Central"/>
</dbReference>
<dbReference type="GO" id="GO:0008284">
    <property type="term" value="P:positive regulation of cell population proliferation"/>
    <property type="evidence" value="ECO:0000318"/>
    <property type="project" value="GO_Central"/>
</dbReference>
<dbReference type="GO" id="GO:0043410">
    <property type="term" value="P:positive regulation of MAPK cascade"/>
    <property type="evidence" value="ECO:0000318"/>
    <property type="project" value="GO_Central"/>
</dbReference>
<dbReference type="CDD" id="cd04973">
    <property type="entry name" value="IgI_1_FGFR"/>
    <property type="match status" value="1"/>
</dbReference>
<dbReference type="CDD" id="cd05857">
    <property type="entry name" value="IgI_2_FGFR"/>
    <property type="match status" value="1"/>
</dbReference>
<dbReference type="CDD" id="cd05858">
    <property type="entry name" value="IgI_3_FGFR2"/>
    <property type="match status" value="1"/>
</dbReference>
<dbReference type="CDD" id="cd05101">
    <property type="entry name" value="PTKc_FGFR2"/>
    <property type="match status" value="1"/>
</dbReference>
<dbReference type="FunFam" id="1.10.510.10:FF:000007">
    <property type="entry name" value="Fibroblast growth factor receptor"/>
    <property type="match status" value="1"/>
</dbReference>
<dbReference type="FunFam" id="2.60.40.10:FF:000016">
    <property type="entry name" value="Fibroblast growth factor receptor"/>
    <property type="match status" value="1"/>
</dbReference>
<dbReference type="FunFam" id="2.60.40.10:FF:000020">
    <property type="entry name" value="Fibroblast growth factor receptor"/>
    <property type="match status" value="1"/>
</dbReference>
<dbReference type="FunFam" id="2.60.40.10:FF:000252">
    <property type="entry name" value="Fibroblast growth factor receptor"/>
    <property type="match status" value="1"/>
</dbReference>
<dbReference type="FunFam" id="3.30.200.20:FF:000011">
    <property type="entry name" value="Fibroblast growth factor receptor"/>
    <property type="match status" value="1"/>
</dbReference>
<dbReference type="Gene3D" id="2.60.40.10">
    <property type="entry name" value="Immunoglobulins"/>
    <property type="match status" value="3"/>
</dbReference>
<dbReference type="Gene3D" id="3.30.200.20">
    <property type="entry name" value="Phosphorylase Kinase, domain 1"/>
    <property type="match status" value="1"/>
</dbReference>
<dbReference type="Gene3D" id="1.10.510.10">
    <property type="entry name" value="Transferase(Phosphotransferase) domain 1"/>
    <property type="match status" value="1"/>
</dbReference>
<dbReference type="InterPro" id="IPR016248">
    <property type="entry name" value="FGF_rcpt_fam"/>
</dbReference>
<dbReference type="InterPro" id="IPR007110">
    <property type="entry name" value="Ig-like_dom"/>
</dbReference>
<dbReference type="InterPro" id="IPR036179">
    <property type="entry name" value="Ig-like_dom_sf"/>
</dbReference>
<dbReference type="InterPro" id="IPR013783">
    <property type="entry name" value="Ig-like_fold"/>
</dbReference>
<dbReference type="InterPro" id="IPR013098">
    <property type="entry name" value="Ig_I-set"/>
</dbReference>
<dbReference type="InterPro" id="IPR003599">
    <property type="entry name" value="Ig_sub"/>
</dbReference>
<dbReference type="InterPro" id="IPR003598">
    <property type="entry name" value="Ig_sub2"/>
</dbReference>
<dbReference type="InterPro" id="IPR011009">
    <property type="entry name" value="Kinase-like_dom_sf"/>
</dbReference>
<dbReference type="InterPro" id="IPR000719">
    <property type="entry name" value="Prot_kinase_dom"/>
</dbReference>
<dbReference type="InterPro" id="IPR017441">
    <property type="entry name" value="Protein_kinase_ATP_BS"/>
</dbReference>
<dbReference type="InterPro" id="IPR050122">
    <property type="entry name" value="RTK"/>
</dbReference>
<dbReference type="InterPro" id="IPR001245">
    <property type="entry name" value="Ser-Thr/Tyr_kinase_cat_dom"/>
</dbReference>
<dbReference type="InterPro" id="IPR008266">
    <property type="entry name" value="Tyr_kinase_AS"/>
</dbReference>
<dbReference type="InterPro" id="IPR020635">
    <property type="entry name" value="Tyr_kinase_cat_dom"/>
</dbReference>
<dbReference type="PANTHER" id="PTHR24416:SF130">
    <property type="entry name" value="FIBROBLAST GROWTH FACTOR RECEPTOR 2"/>
    <property type="match status" value="1"/>
</dbReference>
<dbReference type="PANTHER" id="PTHR24416">
    <property type="entry name" value="TYROSINE-PROTEIN KINASE RECEPTOR"/>
    <property type="match status" value="1"/>
</dbReference>
<dbReference type="Pfam" id="PF07679">
    <property type="entry name" value="I-set"/>
    <property type="match status" value="1"/>
</dbReference>
<dbReference type="Pfam" id="PF13927">
    <property type="entry name" value="Ig_3"/>
    <property type="match status" value="2"/>
</dbReference>
<dbReference type="Pfam" id="PF07714">
    <property type="entry name" value="PK_Tyr_Ser-Thr"/>
    <property type="match status" value="1"/>
</dbReference>
<dbReference type="PIRSF" id="PIRSF000628">
    <property type="entry name" value="FGFR"/>
    <property type="match status" value="1"/>
</dbReference>
<dbReference type="PRINTS" id="PR00109">
    <property type="entry name" value="TYRKINASE"/>
</dbReference>
<dbReference type="SMART" id="SM00409">
    <property type="entry name" value="IG"/>
    <property type="match status" value="3"/>
</dbReference>
<dbReference type="SMART" id="SM00408">
    <property type="entry name" value="IGc2"/>
    <property type="match status" value="3"/>
</dbReference>
<dbReference type="SMART" id="SM00219">
    <property type="entry name" value="TyrKc"/>
    <property type="match status" value="1"/>
</dbReference>
<dbReference type="SUPFAM" id="SSF48726">
    <property type="entry name" value="Immunoglobulin"/>
    <property type="match status" value="3"/>
</dbReference>
<dbReference type="SUPFAM" id="SSF56112">
    <property type="entry name" value="Protein kinase-like (PK-like)"/>
    <property type="match status" value="1"/>
</dbReference>
<dbReference type="PROSITE" id="PS50835">
    <property type="entry name" value="IG_LIKE"/>
    <property type="match status" value="3"/>
</dbReference>
<dbReference type="PROSITE" id="PS00107">
    <property type="entry name" value="PROTEIN_KINASE_ATP"/>
    <property type="match status" value="1"/>
</dbReference>
<dbReference type="PROSITE" id="PS50011">
    <property type="entry name" value="PROTEIN_KINASE_DOM"/>
    <property type="match status" value="1"/>
</dbReference>
<dbReference type="PROSITE" id="PS00109">
    <property type="entry name" value="PROTEIN_KINASE_TYR"/>
    <property type="match status" value="1"/>
</dbReference>
<sequence length="823" mass="92299">MVSWDSGCLICLVVVTMAGLSLARPSFNLVVEDATLEPEEPPTKYQISQPDVHSALPGEPLELRCQLKDAVMISWTKDGVPLGPDNRTVIIGEYLQIKDASPRDSGLYACTAIRTLDSDTLYFIVNVTDALSSGDDEDDNDGSEDFVNDSNQMRAPYWTHTDKMEKRLHAVPAANTVKFRCPAMGNPTPTMRWLKNGKEFKQEHRIGGYKVRNQHWSLIMESVVPSDKGNYTCIVENQYGSINHTYHLDVVERSPHRPILQAGLPANASAVVGGDVEFVCKVYSDAQPHIQWIKHVERNGSKYGPDGLPYLQVLKAAGVNTTDKEIEVLYIRNVTFEDAGEYTCLAGNSIGISFHTAWLTVLPAPEKEKEFPTSPDYLEIAIYCIGVFLIACMVLTVILCRMKNTTKKPDFSSQPAVHKLTKRIPLRRQVTVSADSSSSMNSNTPLVRITTRLSSTADAPMLAGVSEYELPEDPKWEFPRDKLTLGKPLGEGCFGQVVMAEAVGIDKDRPKEAVTVAVKMLKDDATEKDLSDLVSEMEMMKMIGKHKNIINLLGACTQDGPLYVIVEYASKGNLREYLRARRPPGMEYSFDINRVPEEQMTFKDLVSCTYQLARGMEYLASQKCIHRDLAARNVLVTENNVMKIADFGLARDINNIDYYKKTTNGRLPVKWMAPEALFDRVYTHQSDVWSFGVLMWEIFTLGGSPYPGIPVEELFKLLKEGHRMDKPANCTNELYMMMRDCWQAVPSQRPTFKQLVEDLDRILTLTTNEEYLDLSGPLEQYSPSYPDTRSSCSSGDDSVFSPDPMPYEPCLPKYQHMNGSVKT</sequence>
<organism>
    <name type="scientific">Gallus gallus</name>
    <name type="common">Chicken</name>
    <dbReference type="NCBI Taxonomy" id="9031"/>
    <lineage>
        <taxon>Eukaryota</taxon>
        <taxon>Metazoa</taxon>
        <taxon>Chordata</taxon>
        <taxon>Craniata</taxon>
        <taxon>Vertebrata</taxon>
        <taxon>Euteleostomi</taxon>
        <taxon>Archelosauria</taxon>
        <taxon>Archosauria</taxon>
        <taxon>Dinosauria</taxon>
        <taxon>Saurischia</taxon>
        <taxon>Theropoda</taxon>
        <taxon>Coelurosauria</taxon>
        <taxon>Aves</taxon>
        <taxon>Neognathae</taxon>
        <taxon>Galloanserae</taxon>
        <taxon>Galliformes</taxon>
        <taxon>Phasianidae</taxon>
        <taxon>Phasianinae</taxon>
        <taxon>Gallus</taxon>
    </lineage>
</organism>
<accession>P18461</accession>
<reference key="1">
    <citation type="journal article" date="1990" name="Proc. Natl. Acad. Sci. U.S.A.">
        <title>A distinctive family of embryonic protein-tyrosine kinase receptors.</title>
        <authorList>
            <person name="Pasquale E.B."/>
        </authorList>
    </citation>
    <scope>NUCLEOTIDE SEQUENCE [MRNA]</scope>
</reference>
<feature type="signal peptide" evidence="2">
    <location>
        <begin position="1"/>
        <end position="23"/>
    </location>
</feature>
<feature type="chain" id="PRO_0000016791" description="Fibroblast growth factor receptor 2">
    <location>
        <begin position="24"/>
        <end position="823"/>
    </location>
</feature>
<feature type="topological domain" description="Extracellular" evidence="2">
    <location>
        <begin position="24"/>
        <end position="379"/>
    </location>
</feature>
<feature type="transmembrane region" description="Helical" evidence="2">
    <location>
        <begin position="380"/>
        <end position="400"/>
    </location>
</feature>
<feature type="topological domain" description="Cytoplasmic" evidence="2">
    <location>
        <begin position="401"/>
        <end position="823"/>
    </location>
</feature>
<feature type="domain" description="Ig-like C2-type 1">
    <location>
        <begin position="27"/>
        <end position="128"/>
    </location>
</feature>
<feature type="domain" description="Ig-like C2-type 2">
    <location>
        <begin position="156"/>
        <end position="249"/>
    </location>
</feature>
<feature type="domain" description="Ig-like C2-type 3">
    <location>
        <begin position="258"/>
        <end position="360"/>
    </location>
</feature>
<feature type="domain" description="Protein kinase" evidence="4">
    <location>
        <begin position="483"/>
        <end position="772"/>
    </location>
</feature>
<feature type="region of interest" description="Heparin-binding" evidence="1">
    <location>
        <begin position="163"/>
        <end position="180"/>
    </location>
</feature>
<feature type="active site" description="Proton acceptor" evidence="4 5">
    <location>
        <position position="628"/>
    </location>
</feature>
<feature type="binding site" evidence="4">
    <location>
        <begin position="489"/>
        <end position="497"/>
    </location>
    <ligand>
        <name>ATP</name>
        <dbReference type="ChEBI" id="CHEBI:30616"/>
    </ligand>
</feature>
<feature type="binding site" evidence="4">
    <location>
        <position position="519"/>
    </location>
    <ligand>
        <name>ATP</name>
        <dbReference type="ChEBI" id="CHEBI:30616"/>
    </ligand>
</feature>
<feature type="binding site" evidence="4">
    <location>
        <begin position="567"/>
        <end position="569"/>
    </location>
    <ligand>
        <name>ATP</name>
        <dbReference type="ChEBI" id="CHEBI:30616"/>
    </ligand>
</feature>
<feature type="binding site" evidence="4">
    <location>
        <position position="573"/>
    </location>
    <ligand>
        <name>ATP</name>
        <dbReference type="ChEBI" id="CHEBI:30616"/>
    </ligand>
</feature>
<feature type="modified residue" description="Phosphotyrosine; by autocatalysis" evidence="1">
    <location>
        <position position="468"/>
    </location>
</feature>
<feature type="modified residue" description="Phosphotyrosine; by autocatalysis" evidence="1">
    <location>
        <position position="588"/>
    </location>
</feature>
<feature type="modified residue" description="Phosphotyrosine; by autocatalysis" evidence="1">
    <location>
        <position position="658"/>
    </location>
</feature>
<feature type="modified residue" description="Phosphotyrosine; by autocatalysis" evidence="1">
    <location>
        <position position="659"/>
    </location>
</feature>
<feature type="modified residue" description="Phosphotyrosine; by autocatalysis" evidence="1">
    <location>
        <position position="771"/>
    </location>
</feature>
<feature type="glycosylation site" description="N-linked (GlcNAc...) asparagine" evidence="2">
    <location>
        <position position="86"/>
    </location>
</feature>
<feature type="glycosylation site" description="N-linked (GlcNAc...) asparagine" evidence="2">
    <location>
        <position position="126"/>
    </location>
</feature>
<feature type="glycosylation site" description="N-linked (GlcNAc...) asparagine" evidence="2">
    <location>
        <position position="148"/>
    </location>
</feature>
<feature type="glycosylation site" description="N-linked (GlcNAc...) asparagine" evidence="2">
    <location>
        <position position="230"/>
    </location>
</feature>
<feature type="glycosylation site" description="N-linked (GlcNAc...) asparagine" evidence="2">
    <location>
        <position position="243"/>
    </location>
</feature>
<feature type="glycosylation site" description="N-linked (GlcNAc...) asparagine" evidence="2">
    <location>
        <position position="267"/>
    </location>
</feature>
<feature type="glycosylation site" description="N-linked (GlcNAc...) asparagine" evidence="2">
    <location>
        <position position="299"/>
    </location>
</feature>
<feature type="glycosylation site" description="N-linked (GlcNAc...) asparagine" evidence="2">
    <location>
        <position position="320"/>
    </location>
</feature>
<feature type="glycosylation site" description="N-linked (GlcNAc...) asparagine" evidence="2">
    <location>
        <position position="333"/>
    </location>
</feature>
<feature type="disulfide bond" evidence="3">
    <location>
        <begin position="65"/>
        <end position="110"/>
    </location>
</feature>
<feature type="disulfide bond" evidence="3">
    <location>
        <begin position="181"/>
        <end position="233"/>
    </location>
</feature>
<feature type="disulfide bond" evidence="3">
    <location>
        <begin position="280"/>
        <end position="344"/>
    </location>
</feature>
<name>FGFR2_CHICK</name>
<comment type="function">
    <text evidence="1">Tyrosine-protein kinase that acts as a cell-surface receptor for fibroblast growth factors and plays an essential role in the regulation of cell proliferation, differentiation, migration and apoptosis, and in the regulation of embryonic development. Required for normal embryonic patterning, limb bud development, lung morphogenesis, osteogenesis and skin development. Plays an essential role in the regulation of osteoblast differentiation, proliferation and apoptosis, and is required for normal skeleton development. Promotes cell proliferation in keratinocytes and immature osteoblasts, but promotes apoptosis in differentiated osteoblasts. Phosphorylates PLCG1, FRS2 and PAK4. Ligand binding leads to the activation of several signaling cascades. Activation of PLCG1 leads to the production of the cellular signaling molecules diacylglycerol and inositol 1,4,5-trisphosphate. Phosphorylation of FRS2 triggers recruitment of GRB2, GAB1, PIK3R1 and SOS1, and mediates activation of RAS, MAPK1/ERK2, MAPK3/ERK1 and the MAP kinase signaling pathway, as well as of the AKT1 signaling pathway. FGFR2 signaling is down-regulated by ubiquitination, internalization and degradation. Mutations that lead to constitutive kinase activation or impair normal FGFR2 maturation, internalization and degradation lead to aberrant signaling. Over-expressed FGFR2 promotes activation of STAT1 (By similarity).</text>
</comment>
<comment type="catalytic activity">
    <reaction evidence="5">
        <text>L-tyrosyl-[protein] + ATP = O-phospho-L-tyrosyl-[protein] + ADP + H(+)</text>
        <dbReference type="Rhea" id="RHEA:10596"/>
        <dbReference type="Rhea" id="RHEA-COMP:10136"/>
        <dbReference type="Rhea" id="RHEA-COMP:20101"/>
        <dbReference type="ChEBI" id="CHEBI:15378"/>
        <dbReference type="ChEBI" id="CHEBI:30616"/>
        <dbReference type="ChEBI" id="CHEBI:46858"/>
        <dbReference type="ChEBI" id="CHEBI:61978"/>
        <dbReference type="ChEBI" id="CHEBI:456216"/>
        <dbReference type="EC" id="2.7.10.1"/>
    </reaction>
</comment>
<comment type="activity regulation">
    <text evidence="1">Present in an inactive conformation in the absence of bound ligand. Ligand binding leads to dimerization and activation by autophosphorylation on tyrosine residues (By similarity).</text>
</comment>
<comment type="subunit">
    <text evidence="1">Monomer. Homodimer after ligand binding (By similarity).</text>
</comment>
<comment type="subcellular location">
    <subcellularLocation>
        <location>Cell membrane</location>
        <topology>Single-pass type I membrane protein</topology>
    </subcellularLocation>
    <subcellularLocation>
        <location evidence="1">Golgi apparatus</location>
    </subcellularLocation>
    <subcellularLocation>
        <location evidence="1">Cytoplasmic vesicle</location>
    </subcellularLocation>
    <text evidence="1">Detected on osteoblast plasma membrane lipid rafts. After ligand binding, the activated receptor is rapidly internalized and degraded (By similarity).</text>
</comment>
<comment type="domain">
    <text evidence="1">The second and third Ig-like domains directly interact with fibroblast growth factors (FGF) and heparan sulfate proteoglycans.</text>
</comment>
<comment type="PTM">
    <text evidence="1">Autophosphorylated. Binding of FGF family members together with heparan sulfate proteoglycan or heparin promotes receptor dimerization and autophosphorylation on tyrosine residues. Autophosphorylation occurs in trans between the two FGFR molecules present in the dimer (By similarity).</text>
</comment>
<comment type="PTM">
    <text evidence="1">N-glycosylated in the endoplasmic reticulum. The N-glycan chains undergo further maturation to an Endo H-resistant form in the Golgi apparatus (By similarity).</text>
</comment>
<comment type="PTM">
    <text evidence="1">Ubiquitinated. FGFR2 is rapidly ubiquitinated after autophosphorylation, leading to internalization and degradation. Subject to degradation both in lysosomes and by the proteasome (By similarity).</text>
</comment>
<comment type="similarity">
    <text evidence="4">Belongs to the protein kinase superfamily. Tyr protein kinase family. Fibroblast growth factor receptor subfamily.</text>
</comment>
<evidence type="ECO:0000250" key="1"/>
<evidence type="ECO:0000255" key="2"/>
<evidence type="ECO:0000255" key="3">
    <source>
        <dbReference type="PROSITE-ProRule" id="PRU00114"/>
    </source>
</evidence>
<evidence type="ECO:0000255" key="4">
    <source>
        <dbReference type="PROSITE-ProRule" id="PRU00159"/>
    </source>
</evidence>
<evidence type="ECO:0000255" key="5">
    <source>
        <dbReference type="PROSITE-ProRule" id="PRU10028"/>
    </source>
</evidence>
<gene>
    <name type="primary">FGFR2</name>
    <name type="synonym">CEK3</name>
</gene>
<proteinExistence type="evidence at transcript level"/>
<protein>
    <recommendedName>
        <fullName>Fibroblast growth factor receptor 2</fullName>
        <shortName>FGFR-2</shortName>
        <ecNumber>2.7.10.1</ecNumber>
    </recommendedName>
    <alternativeName>
        <fullName>Tyrosine kinase receptor CEK3</fullName>
    </alternativeName>
</protein>
<keyword id="KW-0053">Apoptosis</keyword>
<keyword id="KW-0067">ATP-binding</keyword>
<keyword id="KW-1003">Cell membrane</keyword>
<keyword id="KW-0968">Cytoplasmic vesicle</keyword>
<keyword id="KW-1015">Disulfide bond</keyword>
<keyword id="KW-0325">Glycoprotein</keyword>
<keyword id="KW-0333">Golgi apparatus</keyword>
<keyword id="KW-0393">Immunoglobulin domain</keyword>
<keyword id="KW-0418">Kinase</keyword>
<keyword id="KW-0472">Membrane</keyword>
<keyword id="KW-0547">Nucleotide-binding</keyword>
<keyword id="KW-0597">Phosphoprotein</keyword>
<keyword id="KW-0675">Receptor</keyword>
<keyword id="KW-1185">Reference proteome</keyword>
<keyword id="KW-0677">Repeat</keyword>
<keyword id="KW-0732">Signal</keyword>
<keyword id="KW-0808">Transferase</keyword>
<keyword id="KW-0812">Transmembrane</keyword>
<keyword id="KW-1133">Transmembrane helix</keyword>
<keyword id="KW-0829">Tyrosine-protein kinase</keyword>
<keyword id="KW-0832">Ubl conjugation</keyword>